<organism>
    <name type="scientific">Homo sapiens</name>
    <name type="common">Human</name>
    <dbReference type="NCBI Taxonomy" id="9606"/>
    <lineage>
        <taxon>Eukaryota</taxon>
        <taxon>Metazoa</taxon>
        <taxon>Chordata</taxon>
        <taxon>Craniata</taxon>
        <taxon>Vertebrata</taxon>
        <taxon>Euteleostomi</taxon>
        <taxon>Mammalia</taxon>
        <taxon>Eutheria</taxon>
        <taxon>Euarchontoglires</taxon>
        <taxon>Primates</taxon>
        <taxon>Haplorrhini</taxon>
        <taxon>Catarrhini</taxon>
        <taxon>Hominidae</taxon>
        <taxon>Homo</taxon>
    </lineage>
</organism>
<proteinExistence type="evidence at protein level"/>
<accession>Q9BYX2</accession>
<accession>B3KWD1</accession>
<accession>B4DQ05</accession>
<accession>B9A6J7</accession>
<accession>Q59EU0</accession>
<accession>Q5TBQ5</accession>
<accession>Q6IPC7</accession>
<accession>Q7L1K8</accession>
<accession>Q8WYT1</accession>
<accession>Q9H6A2</accession>
<accession>Q9NSH4</accession>
<reference key="1">
    <citation type="journal article" date="2002" name="Biochem. Biophys. Res. Commun.">
        <title>Serological cloning of PARIS-1: a new TBC domain-containing, immunogenic tumor antigen from a prostate cancer cell line.</title>
        <authorList>
            <person name="Zhou Y."/>
            <person name="Toth M."/>
            <person name="Hamman M.S."/>
            <person name="Monahan S.J."/>
            <person name="Lodge P.A."/>
            <person name="Boynton A.L."/>
            <person name="Salgaller M.L."/>
        </authorList>
    </citation>
    <scope>NUCLEOTIDE SEQUENCE [MRNA] (ISOFORM 2)</scope>
    <scope>TISSUE SPECIFICITY</scope>
    <scope>VARIANT SER-253</scope>
</reference>
<reference key="2">
    <citation type="journal article" date="2009" name="Genes Cells">
        <title>Identification and characterization of a novel Tre-2/Bub2/Cdc16 (TBC) protein that possesses Rab3A-GAP activity.</title>
        <authorList>
            <person name="Ishibashi K."/>
            <person name="Kanno E."/>
            <person name="Itoh T."/>
            <person name="Fukuda M."/>
        </authorList>
    </citation>
    <scope>NUCLEOTIDE SEQUENCE [MRNA] (ISOFORM 1)</scope>
    <source>
        <tissue>Brain</tissue>
    </source>
</reference>
<reference key="3">
    <citation type="submission" date="2000-11" db="EMBL/GenBank/DDBJ databases">
        <title>Novel human cDNA clones with function of inhibiting cancer cell growth.</title>
        <authorList>
            <person name="Jiang H.Q."/>
            <person name="Zhou X.M."/>
            <person name="Zhang P.P."/>
            <person name="Huang Y."/>
            <person name="Qin W.X."/>
            <person name="Zhao X.T."/>
            <person name="Wan D.F."/>
            <person name="Gu J.R."/>
        </authorList>
    </citation>
    <scope>NUCLEOTIDE SEQUENCE [MRNA] (ISOFORM 3)</scope>
</reference>
<reference key="4">
    <citation type="journal article" date="2004" name="Nat. Genet.">
        <title>Complete sequencing and characterization of 21,243 full-length human cDNAs.</title>
        <authorList>
            <person name="Ota T."/>
            <person name="Suzuki Y."/>
            <person name="Nishikawa T."/>
            <person name="Otsuki T."/>
            <person name="Sugiyama T."/>
            <person name="Irie R."/>
            <person name="Wakamatsu A."/>
            <person name="Hayashi K."/>
            <person name="Sato H."/>
            <person name="Nagai K."/>
            <person name="Kimura K."/>
            <person name="Makita H."/>
            <person name="Sekine M."/>
            <person name="Obayashi M."/>
            <person name="Nishi T."/>
            <person name="Shibahara T."/>
            <person name="Tanaka T."/>
            <person name="Ishii S."/>
            <person name="Yamamoto J."/>
            <person name="Saito K."/>
            <person name="Kawai Y."/>
            <person name="Isono Y."/>
            <person name="Nakamura Y."/>
            <person name="Nagahari K."/>
            <person name="Murakami K."/>
            <person name="Yasuda T."/>
            <person name="Iwayanagi T."/>
            <person name="Wagatsuma M."/>
            <person name="Shiratori A."/>
            <person name="Sudo H."/>
            <person name="Hosoiri T."/>
            <person name="Kaku Y."/>
            <person name="Kodaira H."/>
            <person name="Kondo H."/>
            <person name="Sugawara M."/>
            <person name="Takahashi M."/>
            <person name="Kanda K."/>
            <person name="Yokoi T."/>
            <person name="Furuya T."/>
            <person name="Kikkawa E."/>
            <person name="Omura Y."/>
            <person name="Abe K."/>
            <person name="Kamihara K."/>
            <person name="Katsuta N."/>
            <person name="Sato K."/>
            <person name="Tanikawa M."/>
            <person name="Yamazaki M."/>
            <person name="Ninomiya K."/>
            <person name="Ishibashi T."/>
            <person name="Yamashita H."/>
            <person name="Murakawa K."/>
            <person name="Fujimori K."/>
            <person name="Tanai H."/>
            <person name="Kimata M."/>
            <person name="Watanabe M."/>
            <person name="Hiraoka S."/>
            <person name="Chiba Y."/>
            <person name="Ishida S."/>
            <person name="Ono Y."/>
            <person name="Takiguchi S."/>
            <person name="Watanabe S."/>
            <person name="Yosida M."/>
            <person name="Hotuta T."/>
            <person name="Kusano J."/>
            <person name="Kanehori K."/>
            <person name="Takahashi-Fujii A."/>
            <person name="Hara H."/>
            <person name="Tanase T.-O."/>
            <person name="Nomura Y."/>
            <person name="Togiya S."/>
            <person name="Komai F."/>
            <person name="Hara R."/>
            <person name="Takeuchi K."/>
            <person name="Arita M."/>
            <person name="Imose N."/>
            <person name="Musashino K."/>
            <person name="Yuuki H."/>
            <person name="Oshima A."/>
            <person name="Sasaki N."/>
            <person name="Aotsuka S."/>
            <person name="Yoshikawa Y."/>
            <person name="Matsunawa H."/>
            <person name="Ichihara T."/>
            <person name="Shiohata N."/>
            <person name="Sano S."/>
            <person name="Moriya S."/>
            <person name="Momiyama H."/>
            <person name="Satoh N."/>
            <person name="Takami S."/>
            <person name="Terashima Y."/>
            <person name="Suzuki O."/>
            <person name="Nakagawa S."/>
            <person name="Senoh A."/>
            <person name="Mizoguchi H."/>
            <person name="Goto Y."/>
            <person name="Shimizu F."/>
            <person name="Wakebe H."/>
            <person name="Hishigaki H."/>
            <person name="Watanabe T."/>
            <person name="Sugiyama A."/>
            <person name="Takemoto M."/>
            <person name="Kawakami B."/>
            <person name="Yamazaki M."/>
            <person name="Watanabe K."/>
            <person name="Kumagai A."/>
            <person name="Itakura S."/>
            <person name="Fukuzumi Y."/>
            <person name="Fujimori Y."/>
            <person name="Komiyama M."/>
            <person name="Tashiro H."/>
            <person name="Tanigami A."/>
            <person name="Fujiwara T."/>
            <person name="Ono T."/>
            <person name="Yamada K."/>
            <person name="Fujii Y."/>
            <person name="Ozaki K."/>
            <person name="Hirao M."/>
            <person name="Ohmori Y."/>
            <person name="Kawabata A."/>
            <person name="Hikiji T."/>
            <person name="Kobatake N."/>
            <person name="Inagaki H."/>
            <person name="Ikema Y."/>
            <person name="Okamoto S."/>
            <person name="Okitani R."/>
            <person name="Kawakami T."/>
            <person name="Noguchi S."/>
            <person name="Itoh T."/>
            <person name="Shigeta K."/>
            <person name="Senba T."/>
            <person name="Matsumura K."/>
            <person name="Nakajima Y."/>
            <person name="Mizuno T."/>
            <person name="Morinaga M."/>
            <person name="Sasaki M."/>
            <person name="Togashi T."/>
            <person name="Oyama M."/>
            <person name="Hata H."/>
            <person name="Watanabe M."/>
            <person name="Komatsu T."/>
            <person name="Mizushima-Sugano J."/>
            <person name="Satoh T."/>
            <person name="Shirai Y."/>
            <person name="Takahashi Y."/>
            <person name="Nakagawa K."/>
            <person name="Okumura K."/>
            <person name="Nagase T."/>
            <person name="Nomura N."/>
            <person name="Kikuchi H."/>
            <person name="Masuho Y."/>
            <person name="Yamashita R."/>
            <person name="Nakai K."/>
            <person name="Yada T."/>
            <person name="Nakamura Y."/>
            <person name="Ohara O."/>
            <person name="Isogai T."/>
            <person name="Sugano S."/>
        </authorList>
    </citation>
    <scope>NUCLEOTIDE SEQUENCE [LARGE SCALE MRNA] (ISOFORMS 1 AND 4)</scope>
    <scope>VARIANTS THR-241; SER-253 AND VAL-261</scope>
</reference>
<reference key="5">
    <citation type="journal article" date="2007" name="BMC Genomics">
        <title>The full-ORF clone resource of the German cDNA consortium.</title>
        <authorList>
            <person name="Bechtel S."/>
            <person name="Rosenfelder H."/>
            <person name="Duda A."/>
            <person name="Schmidt C.P."/>
            <person name="Ernst U."/>
            <person name="Wellenreuther R."/>
            <person name="Mehrle A."/>
            <person name="Schuster C."/>
            <person name="Bahr A."/>
            <person name="Bloecker H."/>
            <person name="Heubner D."/>
            <person name="Hoerlein A."/>
            <person name="Michel G."/>
            <person name="Wedler H."/>
            <person name="Koehrer K."/>
            <person name="Ottenwaelder B."/>
            <person name="Poustka A."/>
            <person name="Wiemann S."/>
            <person name="Schupp I."/>
        </authorList>
    </citation>
    <scope>NUCLEOTIDE SEQUENCE [LARGE SCALE MRNA] (ISOFORM 6)</scope>
    <source>
        <tissue>Amygdala</tissue>
    </source>
</reference>
<reference key="6">
    <citation type="journal article" date="2004" name="Nature">
        <title>DNA sequence and analysis of human chromosome 9.</title>
        <authorList>
            <person name="Humphray S.J."/>
            <person name="Oliver K."/>
            <person name="Hunt A.R."/>
            <person name="Plumb R.W."/>
            <person name="Loveland J.E."/>
            <person name="Howe K.L."/>
            <person name="Andrews T.D."/>
            <person name="Searle S."/>
            <person name="Hunt S.E."/>
            <person name="Scott C.E."/>
            <person name="Jones M.C."/>
            <person name="Ainscough R."/>
            <person name="Almeida J.P."/>
            <person name="Ambrose K.D."/>
            <person name="Ashwell R.I.S."/>
            <person name="Babbage A.K."/>
            <person name="Babbage S."/>
            <person name="Bagguley C.L."/>
            <person name="Bailey J."/>
            <person name="Banerjee R."/>
            <person name="Barker D.J."/>
            <person name="Barlow K.F."/>
            <person name="Bates K."/>
            <person name="Beasley H."/>
            <person name="Beasley O."/>
            <person name="Bird C.P."/>
            <person name="Bray-Allen S."/>
            <person name="Brown A.J."/>
            <person name="Brown J.Y."/>
            <person name="Burford D."/>
            <person name="Burrill W."/>
            <person name="Burton J."/>
            <person name="Carder C."/>
            <person name="Carter N.P."/>
            <person name="Chapman J.C."/>
            <person name="Chen Y."/>
            <person name="Clarke G."/>
            <person name="Clark S.Y."/>
            <person name="Clee C.M."/>
            <person name="Clegg S."/>
            <person name="Collier R.E."/>
            <person name="Corby N."/>
            <person name="Crosier M."/>
            <person name="Cummings A.T."/>
            <person name="Davies J."/>
            <person name="Dhami P."/>
            <person name="Dunn M."/>
            <person name="Dutta I."/>
            <person name="Dyer L.W."/>
            <person name="Earthrowl M.E."/>
            <person name="Faulkner L."/>
            <person name="Fleming C.J."/>
            <person name="Frankish A."/>
            <person name="Frankland J.A."/>
            <person name="French L."/>
            <person name="Fricker D.G."/>
            <person name="Garner P."/>
            <person name="Garnett J."/>
            <person name="Ghori J."/>
            <person name="Gilbert J.G.R."/>
            <person name="Glison C."/>
            <person name="Grafham D.V."/>
            <person name="Gribble S."/>
            <person name="Griffiths C."/>
            <person name="Griffiths-Jones S."/>
            <person name="Grocock R."/>
            <person name="Guy J."/>
            <person name="Hall R.E."/>
            <person name="Hammond S."/>
            <person name="Harley J.L."/>
            <person name="Harrison E.S.I."/>
            <person name="Hart E.A."/>
            <person name="Heath P.D."/>
            <person name="Henderson C.D."/>
            <person name="Hopkins B.L."/>
            <person name="Howard P.J."/>
            <person name="Howden P.J."/>
            <person name="Huckle E."/>
            <person name="Johnson C."/>
            <person name="Johnson D."/>
            <person name="Joy A.A."/>
            <person name="Kay M."/>
            <person name="Keenan S."/>
            <person name="Kershaw J.K."/>
            <person name="Kimberley A.M."/>
            <person name="King A."/>
            <person name="Knights A."/>
            <person name="Laird G.K."/>
            <person name="Langford C."/>
            <person name="Lawlor S."/>
            <person name="Leongamornlert D.A."/>
            <person name="Leversha M."/>
            <person name="Lloyd C."/>
            <person name="Lloyd D.M."/>
            <person name="Lovell J."/>
            <person name="Martin S."/>
            <person name="Mashreghi-Mohammadi M."/>
            <person name="Matthews L."/>
            <person name="McLaren S."/>
            <person name="McLay K.E."/>
            <person name="McMurray A."/>
            <person name="Milne S."/>
            <person name="Nickerson T."/>
            <person name="Nisbett J."/>
            <person name="Nordsiek G."/>
            <person name="Pearce A.V."/>
            <person name="Peck A.I."/>
            <person name="Porter K.M."/>
            <person name="Pandian R."/>
            <person name="Pelan S."/>
            <person name="Phillimore B."/>
            <person name="Povey S."/>
            <person name="Ramsey Y."/>
            <person name="Rand V."/>
            <person name="Scharfe M."/>
            <person name="Sehra H.K."/>
            <person name="Shownkeen R."/>
            <person name="Sims S.K."/>
            <person name="Skuce C.D."/>
            <person name="Smith M."/>
            <person name="Steward C.A."/>
            <person name="Swarbreck D."/>
            <person name="Sycamore N."/>
            <person name="Tester J."/>
            <person name="Thorpe A."/>
            <person name="Tracey A."/>
            <person name="Tromans A."/>
            <person name="Thomas D.W."/>
            <person name="Wall M."/>
            <person name="Wallis J.M."/>
            <person name="West A.P."/>
            <person name="Whitehead S.L."/>
            <person name="Willey D.L."/>
            <person name="Williams S.A."/>
            <person name="Wilming L."/>
            <person name="Wray P.W."/>
            <person name="Young L."/>
            <person name="Ashurst J.L."/>
            <person name="Coulson A."/>
            <person name="Blocker H."/>
            <person name="Durbin R.M."/>
            <person name="Sulston J.E."/>
            <person name="Hubbard T."/>
            <person name="Jackson M.J."/>
            <person name="Bentley D.R."/>
            <person name="Beck S."/>
            <person name="Rogers J."/>
            <person name="Dunham I."/>
        </authorList>
    </citation>
    <scope>NUCLEOTIDE SEQUENCE [LARGE SCALE GENOMIC DNA]</scope>
    <scope>VARIANT VAL-261</scope>
    <source>
        <tissue>Brain</tissue>
    </source>
</reference>
<reference key="7">
    <citation type="submission" date="2005-07" db="EMBL/GenBank/DDBJ databases">
        <authorList>
            <person name="Mural R.J."/>
            <person name="Istrail S."/>
            <person name="Sutton G.G."/>
            <person name="Florea L."/>
            <person name="Halpern A.L."/>
            <person name="Mobarry C.M."/>
            <person name="Lippert R."/>
            <person name="Walenz B."/>
            <person name="Shatkay H."/>
            <person name="Dew I."/>
            <person name="Miller J.R."/>
            <person name="Flanigan M.J."/>
            <person name="Edwards N.J."/>
            <person name="Bolanos R."/>
            <person name="Fasulo D."/>
            <person name="Halldorsson B.V."/>
            <person name="Hannenhalli S."/>
            <person name="Turner R."/>
            <person name="Yooseph S."/>
            <person name="Lu F."/>
            <person name="Nusskern D.R."/>
            <person name="Shue B.C."/>
            <person name="Zheng X.H."/>
            <person name="Zhong F."/>
            <person name="Delcher A.L."/>
            <person name="Huson D.H."/>
            <person name="Kravitz S.A."/>
            <person name="Mouchard L."/>
            <person name="Reinert K."/>
            <person name="Remington K.A."/>
            <person name="Clark A.G."/>
            <person name="Waterman M.S."/>
            <person name="Eichler E.E."/>
            <person name="Adams M.D."/>
            <person name="Hunkapiller M.W."/>
            <person name="Myers E.W."/>
            <person name="Venter J.C."/>
        </authorList>
    </citation>
    <scope>NUCLEOTIDE SEQUENCE [LARGE SCALE GENOMIC DNA]</scope>
</reference>
<reference key="8">
    <citation type="journal article" date="2004" name="Genome Res.">
        <title>The status, quality, and expansion of the NIH full-length cDNA project: the Mammalian Gene Collection (MGC).</title>
        <authorList>
            <consortium name="The MGC Project Team"/>
        </authorList>
    </citation>
    <scope>NUCLEOTIDE SEQUENCE [LARGE SCALE MRNA] (ISOFORMS 5 AND 6)</scope>
    <source>
        <tissue>Brain</tissue>
    </source>
</reference>
<reference key="9">
    <citation type="submission" date="2005-03" db="EMBL/GenBank/DDBJ databases">
        <title>Homo sapiens protein coding cDNA.</title>
        <authorList>
            <person name="Totoki Y."/>
            <person name="Toyoda A."/>
            <person name="Takeda T."/>
            <person name="Sakaki Y."/>
            <person name="Tanaka A."/>
            <person name="Yokoyama S."/>
            <person name="Ohara O."/>
            <person name="Nagase T."/>
            <person name="Kikuno R.F."/>
        </authorList>
    </citation>
    <scope>NUCLEOTIDE SEQUENCE [LARGE SCALE MRNA] OF 8-459</scope>
    <scope>VARIANT VAL-261</scope>
    <source>
        <tissue>Brain</tissue>
    </source>
</reference>
<reference key="10">
    <citation type="journal article" date="2006" name="Cell">
        <title>Global, in vivo, and site-specific phosphorylation dynamics in signaling networks.</title>
        <authorList>
            <person name="Olsen J.V."/>
            <person name="Blagoev B."/>
            <person name="Gnad F."/>
            <person name="Macek B."/>
            <person name="Kumar C."/>
            <person name="Mortensen P."/>
            <person name="Mann M."/>
        </authorList>
    </citation>
    <scope>PHOSPHORYLATION [LARGE SCALE ANALYSIS] AT SER-915 AND SER-920</scope>
    <scope>IDENTIFICATION BY MASS SPECTROMETRY [LARGE SCALE ANALYSIS]</scope>
    <source>
        <tissue>Cervix carcinoma</tissue>
    </source>
</reference>
<reference key="11">
    <citation type="journal article" date="2008" name="Proc. Natl. Acad. Sci. U.S.A.">
        <title>A quantitative atlas of mitotic phosphorylation.</title>
        <authorList>
            <person name="Dephoure N."/>
            <person name="Zhou C."/>
            <person name="Villen J."/>
            <person name="Beausoleil S.A."/>
            <person name="Bakalarski C.E."/>
            <person name="Elledge S.J."/>
            <person name="Gygi S.P."/>
        </authorList>
    </citation>
    <scope>PHOSPHORYLATION [LARGE SCALE ANALYSIS] AT SER-436 AND SER-920</scope>
    <scope>IDENTIFICATION BY MASS SPECTROMETRY [LARGE SCALE ANALYSIS]</scope>
    <source>
        <tissue>Cervix carcinoma</tissue>
    </source>
</reference>
<reference key="12">
    <citation type="journal article" date="2010" name="Curr. Biol.">
        <title>Armus is a Rac1 effector that inactivates Rab7 and regulates E-cadherin degradation.</title>
        <authorList>
            <person name="Frasa M.A."/>
            <person name="Maximiano F.C."/>
            <person name="Smolarczyk K."/>
            <person name="Francis R.E."/>
            <person name="Betson M.E."/>
            <person name="Lozano E."/>
            <person name="Goldenring J."/>
            <person name="Seabra M.C."/>
            <person name="Rak A."/>
            <person name="Ahmadian M.R."/>
            <person name="Braga V.M."/>
        </authorList>
    </citation>
    <scope>FUNCTION</scope>
    <scope>INTERACTION WITH RAC1 AND CDH1</scope>
    <scope>TISSUE SPECIFICITY</scope>
    <scope>SUBCELLULAR LOCATION</scope>
</reference>
<reference key="13">
    <citation type="journal article" date="2011" name="BMC Syst. Biol.">
        <title>Initial characterization of the human central proteome.</title>
        <authorList>
            <person name="Burkard T.R."/>
            <person name="Planyavsky M."/>
            <person name="Kaupe I."/>
            <person name="Breitwieser F.P."/>
            <person name="Buerckstuemmer T."/>
            <person name="Bennett K.L."/>
            <person name="Superti-Furga G."/>
            <person name="Colinge J."/>
        </authorList>
    </citation>
    <scope>IDENTIFICATION BY MASS SPECTROMETRY [LARGE SCALE ANALYSIS]</scope>
</reference>
<reference key="14">
    <citation type="journal article" date="2012" name="Proc. Natl. Acad. Sci. U.S.A.">
        <title>N-terminal acetylome analyses and functional insights of the N-terminal acetyltransferase NatB.</title>
        <authorList>
            <person name="Van Damme P."/>
            <person name="Lasa M."/>
            <person name="Polevoda B."/>
            <person name="Gazquez C."/>
            <person name="Elosegui-Artola A."/>
            <person name="Kim D.S."/>
            <person name="De Juan-Pardo E."/>
            <person name="Demeyer K."/>
            <person name="Hole K."/>
            <person name="Larrea E."/>
            <person name="Timmerman E."/>
            <person name="Prieto J."/>
            <person name="Arnesen T."/>
            <person name="Sherman F."/>
            <person name="Gevaert K."/>
            <person name="Aldabe R."/>
        </authorList>
    </citation>
    <scope>ACETYLATION [LARGE SCALE ANALYSIS] AT MET-1</scope>
    <scope>IDENTIFICATION BY MASS SPECTROMETRY [LARGE SCALE ANALYSIS]</scope>
</reference>
<reference key="15">
    <citation type="submission" date="2006-09" db="PDB data bank">
        <title>Solution structure of the PH domain of TBC1 domain family member 2 protein from human.</title>
        <authorList>
            <consortium name="RIKEN structural genomics initiative (RSGI)"/>
        </authorList>
    </citation>
    <scope>STRUCTURE BY NMR OF 46-151</scope>
</reference>
<evidence type="ECO:0000255" key="1"/>
<evidence type="ECO:0000255" key="2">
    <source>
        <dbReference type="PROSITE-ProRule" id="PRU00145"/>
    </source>
</evidence>
<evidence type="ECO:0000255" key="3">
    <source>
        <dbReference type="PROSITE-ProRule" id="PRU00163"/>
    </source>
</evidence>
<evidence type="ECO:0000256" key="4">
    <source>
        <dbReference type="SAM" id="MobiDB-lite"/>
    </source>
</evidence>
<evidence type="ECO:0000269" key="5">
    <source>
    </source>
</evidence>
<evidence type="ECO:0000269" key="6">
    <source>
    </source>
</evidence>
<evidence type="ECO:0000269" key="7">
    <source>
    </source>
</evidence>
<evidence type="ECO:0000269" key="8">
    <source>
    </source>
</evidence>
<evidence type="ECO:0000269" key="9">
    <source ref="9"/>
</evidence>
<evidence type="ECO:0000303" key="10">
    <source>
    </source>
</evidence>
<evidence type="ECO:0000303" key="11">
    <source>
    </source>
</evidence>
<evidence type="ECO:0000303" key="12">
    <source>
    </source>
</evidence>
<evidence type="ECO:0000303" key="13">
    <source>
    </source>
</evidence>
<evidence type="ECO:0000303" key="14">
    <source ref="3"/>
</evidence>
<evidence type="ECO:0000305" key="15"/>
<evidence type="ECO:0007744" key="16">
    <source>
    </source>
</evidence>
<evidence type="ECO:0007744" key="17">
    <source>
    </source>
</evidence>
<evidence type="ECO:0007744" key="18">
    <source>
    </source>
</evidence>
<evidence type="ECO:0007829" key="19">
    <source>
        <dbReference type="PDB" id="2DHK"/>
    </source>
</evidence>
<keyword id="KW-0002">3D-structure</keyword>
<keyword id="KW-0007">Acetylation</keyword>
<keyword id="KW-0025">Alternative splicing</keyword>
<keyword id="KW-0965">Cell junction</keyword>
<keyword id="KW-0175">Coiled coil</keyword>
<keyword id="KW-0963">Cytoplasm</keyword>
<keyword id="KW-0968">Cytoplasmic vesicle</keyword>
<keyword id="KW-0343">GTPase activation</keyword>
<keyword id="KW-0597">Phosphoprotein</keyword>
<keyword id="KW-1267">Proteomics identification</keyword>
<keyword id="KW-1185">Reference proteome</keyword>
<feature type="chain" id="PRO_0000208024" description="TBC1 domain family member 2A">
    <location>
        <begin position="1"/>
        <end position="928"/>
    </location>
</feature>
<feature type="domain" description="PH" evidence="2">
    <location>
        <begin position="45"/>
        <end position="142"/>
    </location>
</feature>
<feature type="domain" description="Rab-GAP TBC" evidence="3">
    <location>
        <begin position="625"/>
        <end position="817"/>
    </location>
</feature>
<feature type="region of interest" description="Interaction with CADH1">
    <location>
        <begin position="1"/>
        <end position="169"/>
    </location>
</feature>
<feature type="region of interest" description="Disordered" evidence="4">
    <location>
        <begin position="1"/>
        <end position="39"/>
    </location>
</feature>
<feature type="region of interest" description="Disordered" evidence="4">
    <location>
        <begin position="225"/>
        <end position="275"/>
    </location>
</feature>
<feature type="region of interest" description="Interaction with RAC1" evidence="8">
    <location>
        <begin position="295"/>
        <end position="433"/>
    </location>
</feature>
<feature type="coiled-coil region" evidence="1">
    <location>
        <begin position="298"/>
        <end position="416"/>
    </location>
</feature>
<feature type="coiled-coil region" evidence="1">
    <location>
        <begin position="875"/>
        <end position="913"/>
    </location>
</feature>
<feature type="compositionally biased region" description="Low complexity" evidence="4">
    <location>
        <begin position="1"/>
        <end position="19"/>
    </location>
</feature>
<feature type="modified residue" description="N-acetylmethionine" evidence="18">
    <location>
        <position position="1"/>
    </location>
</feature>
<feature type="modified residue" description="Phosphoserine" evidence="17">
    <location>
        <position position="436"/>
    </location>
</feature>
<feature type="modified residue" description="Phosphoserine" evidence="16">
    <location>
        <position position="915"/>
    </location>
</feature>
<feature type="modified residue" description="Phosphoserine" evidence="16 17">
    <location>
        <position position="920"/>
    </location>
</feature>
<feature type="splice variant" id="VSP_039379" description="In isoform 6." evidence="12 13">
    <location>
        <begin position="1"/>
        <end position="460"/>
    </location>
</feature>
<feature type="splice variant" id="VSP_039380" description="In isoform 5." evidence="12">
    <original>MEGAGENAPESSSSAPGSEESARDPQVPPPEEESGDCARSLEAVPKKLCGYLSKFGGKGPIRGWKSRWFFYDERKCQLYYSRTAQDANPLDSIDLSSAVFDCKADAEEGIFEIKTPSRVITLKAATKQAMLYWLQQLQMKRWEFHNSPPAPPATPDAALAGNGPVLHLELGQEEAELEEFLCPVKTPPGLVGVAAALQPFPALQNISLKHLGTEIQNTMHNIRGNKQAQGTGHEPPGEDSPQSGEPQREEQPLASDASTPGREPEDSPKPAPKPSLTISFAQKAKRQNNTFPFFSEGITRNRTAQEKVAALEQQVLMLTKELKSQKELVKILHKALEAAQQEKRASSAYLAAAEDKDRLELVRHKVRQIAELGRRVEALEQERESLAHTASLREQQVQELQQHVQLLMDKNHAKQQVICKLSEKVTQDFTHPPDQ</original>
    <variation>MPIPWTAST</variation>
    <location>
        <begin position="1"/>
        <end position="435"/>
    </location>
</feature>
<feature type="splice variant" id="VSP_039381" description="In isoform 4." evidence="11">
    <location>
        <begin position="1"/>
        <end position="218"/>
    </location>
</feature>
<feature type="splice variant" id="VSP_039382" description="In isoform 2." evidence="10">
    <location>
        <begin position="820"/>
        <end position="830"/>
    </location>
</feature>
<feature type="splice variant" id="VSP_039383" description="In isoform 3." evidence="14">
    <location>
        <begin position="861"/>
        <end position="928"/>
    </location>
</feature>
<feature type="sequence variant" id="VAR_046707" description="In dbSNP:rs879368." evidence="6">
    <original>P</original>
    <variation>T</variation>
    <location>
        <position position="241"/>
    </location>
</feature>
<feature type="sequence variant" id="VAR_046708" description="In dbSNP:rs879369." evidence="5 6">
    <original>L</original>
    <variation>S</variation>
    <location>
        <position position="253"/>
    </location>
</feature>
<feature type="sequence variant" id="VAR_046709" description="In dbSNP:rs1573025." evidence="6 7 9">
    <original>G</original>
    <variation>V</variation>
    <location>
        <position position="261"/>
    </location>
</feature>
<feature type="sequence conflict" description="In Ref. 4; BAG60767." evidence="15" ref="4">
    <location>
        <begin position="189"/>
        <end position="195"/>
    </location>
</feature>
<feature type="sequence conflict" description="In Ref. 9; BAD92958." evidence="15" ref="9">
    <original>D</original>
    <variation>F</variation>
    <location>
        <position position="459"/>
    </location>
</feature>
<feature type="sequence conflict" description="In Ref. 1; AAK07684." evidence="15" ref="1">
    <original>S</original>
    <variation>F</variation>
    <location>
        <position position="473"/>
    </location>
</feature>
<feature type="sequence conflict" description="In Ref. 4; BAG54093." evidence="15" ref="4">
    <original>V</original>
    <variation>A</variation>
    <location>
        <position position="634"/>
    </location>
</feature>
<feature type="sequence conflict" description="In Ref. 3; AAL55877." evidence="15" ref="3">
    <original>Q</original>
    <variation>H</variation>
    <location>
        <position position="840"/>
    </location>
</feature>
<feature type="sequence conflict" description="In Ref. 4; BAG60767." evidence="15" ref="4">
    <original>I</original>
    <variation>T</variation>
    <location>
        <position position="856"/>
    </location>
</feature>
<feature type="strand" evidence="19">
    <location>
        <begin position="49"/>
        <end position="54"/>
    </location>
</feature>
<feature type="strand" evidence="19">
    <location>
        <begin position="58"/>
        <end position="61"/>
    </location>
</feature>
<feature type="strand" evidence="19">
    <location>
        <begin position="65"/>
        <end position="72"/>
    </location>
</feature>
<feature type="turn" evidence="19">
    <location>
        <begin position="73"/>
        <end position="76"/>
    </location>
</feature>
<feature type="strand" evidence="19">
    <location>
        <begin position="77"/>
        <end position="83"/>
    </location>
</feature>
<feature type="strand" evidence="19">
    <location>
        <begin position="90"/>
        <end position="94"/>
    </location>
</feature>
<feature type="helix" evidence="19">
    <location>
        <begin position="95"/>
        <end position="97"/>
    </location>
</feature>
<feature type="strand" evidence="19">
    <location>
        <begin position="99"/>
        <end position="102"/>
    </location>
</feature>
<feature type="helix" evidence="19">
    <location>
        <begin position="106"/>
        <end position="108"/>
    </location>
</feature>
<feature type="strand" evidence="19">
    <location>
        <begin position="110"/>
        <end position="114"/>
    </location>
</feature>
<feature type="strand" evidence="19">
    <location>
        <begin position="120"/>
        <end position="123"/>
    </location>
</feature>
<feature type="helix" evidence="19">
    <location>
        <begin position="127"/>
        <end position="146"/>
    </location>
</feature>
<feature type="strand" evidence="19">
    <location>
        <begin position="149"/>
        <end position="151"/>
    </location>
</feature>
<gene>
    <name type="primary">TBC1D2</name>
    <name type="synonym">PARIS1</name>
    <name type="synonym">PP8997</name>
    <name type="synonym">TBC1D2A</name>
</gene>
<protein>
    <recommendedName>
        <fullName>TBC1 domain family member 2A</fullName>
    </recommendedName>
    <alternativeName>
        <fullName>Armus</fullName>
    </alternativeName>
    <alternativeName>
        <fullName>Prostate antigen recognized and identified by SEREX 1</fullName>
        <shortName>PARIS-1</shortName>
    </alternativeName>
</protein>
<name>TBD2A_HUMAN</name>
<sequence length="928" mass="105414">MEGAGENAPESSSSAPGSEESARDPQVPPPEEESGDCARSLEAVPKKLCGYLSKFGGKGPIRGWKSRWFFYDERKCQLYYSRTAQDANPLDSIDLSSAVFDCKADAEEGIFEIKTPSRVITLKAATKQAMLYWLQQLQMKRWEFHNSPPAPPATPDAALAGNGPVLHLELGQEEAELEEFLCPVKTPPGLVGVAAALQPFPALQNISLKHLGTEIQNTMHNIRGNKQAQGTGHEPPGEDSPQSGEPQREEQPLASDASTPGREPEDSPKPAPKPSLTISFAQKAKRQNNTFPFFSEGITRNRTAQEKVAALEQQVLMLTKELKSQKELVKILHKALEAAQQEKRASSAYLAAAEDKDRLELVRHKVRQIAELGRRVEALEQERESLAHTASLREQQVQELQQHVQLLMDKNHAKQQVICKLSEKVTQDFTHPPDQSPLRPDAANRDFLSQQGKIEHLKDDMEAYRTQNCFLNSEIHQVTKIWRKVAEKEKALLTKCAYLQARNCQVESKYLAGLRRLQEALGDEASECSELLRQLVQEALQWEAGEASSDSIELSPISKYDEYGFLTVPDYEVEDLKLLAKIQALESRSHHLLGLEAVDRPLRERWAALGDLVPSAELKQLLRAGVPREHRPRVWRWLVHLRVQHLHTPGCYQELLSRGQAREHPAARQIELDLNRTFPNNKHFTCPTSSFPDKLRRVLLAFSWQNPTIGYCQGLNRLAAIALLVLEEEESAFWCLVAIVETIMPADYYCNTLTASQVDQRVLQDLLSEKLPRLMAHLGQHHVDLSLVTFNWFLVVFADSLISNILLRVWDAFLYEGTKVVFRYALAIFKYNEKEILRLQNGLEIYQYLRFFTKTISNSRKLMNIAFNDMNPFRMKQLRQLRMVHRERLEAELRELEQLKAEYLERRASRRRAVSEGCASEDEVEGEA</sequence>
<comment type="function">
    <text evidence="8">Acts as a GTPase-activating protein for RAB7A. Signal effector acting as a linker between RAC1 and RAB7A, leading to RAB7A inactivation and subsequent inhibition of cadherin degradation and reduced cell-cell adhesion.</text>
</comment>
<comment type="subunit">
    <text evidence="8">Interacts with activated RAC1 and CDH1.</text>
</comment>
<comment type="interaction">
    <interactant intactId="EBI-13560915">
        <id>Q9BYX2-5</id>
    </interactant>
    <interactant intactId="EBI-2511344">
        <id>Q8NC69</id>
        <label>KCTD6</label>
    </interactant>
    <organismsDiffer>false</organismsDiffer>
    <experiments>3</experiments>
</comment>
<comment type="subcellular location">
    <subcellularLocation>
        <location evidence="8">Cytoplasm</location>
    </subcellularLocation>
    <subcellularLocation>
        <location evidence="8">Cytoplasmic vesicle</location>
    </subcellularLocation>
    <subcellularLocation>
        <location evidence="8">Cell junction</location>
    </subcellularLocation>
</comment>
<comment type="alternative products">
    <event type="alternative splicing"/>
    <isoform>
        <id>Q9BYX2-1</id>
        <name>1</name>
        <name>A variant C</name>
        <sequence type="displayed"/>
    </isoform>
    <isoform>
        <id>Q9BYX2-2</id>
        <name>2</name>
        <name>PARIS-1</name>
        <sequence type="described" ref="VSP_039382"/>
    </isoform>
    <isoform>
        <id>Q9BYX2-3</id>
        <name>3</name>
        <name>A</name>
        <sequence type="described" ref="VSP_039383"/>
    </isoform>
    <isoform>
        <id>Q9BYX2-4</id>
        <name>4</name>
        <sequence type="described" ref="VSP_039381"/>
    </isoform>
    <isoform>
        <id>Q9BYX2-5</id>
        <name>5</name>
        <sequence type="described" ref="VSP_039380"/>
    </isoform>
    <isoform>
        <id>Q9BYX2-6</id>
        <name>6</name>
        <sequence type="described" ref="VSP_039379"/>
    </isoform>
</comment>
<comment type="tissue specificity">
    <text evidence="5 8">Expressed in a broad range of tissues, especially in kidney, liver, lung and placenta. Also expressed in keratinocytes and epithelia-containing organs. Isoform 2 is differentially expressed in prostate normal and cancer cells (at protein level).</text>
</comment>
<comment type="miscellaneous">
    <text>'Armus' means hinge, linker in Latin and ancient Greek.</text>
</comment>
<comment type="sequence caution" evidence="15">
    <conflict type="erroneous initiation">
        <sequence resource="EMBL-CDS" id="CAB89247"/>
    </conflict>
    <text>Extended N-terminus.</text>
</comment>
<dbReference type="EMBL" id="AY026527">
    <property type="protein sequence ID" value="AAK07684.1"/>
    <property type="molecule type" value="mRNA"/>
</dbReference>
<dbReference type="EMBL" id="AB449882">
    <property type="protein sequence ID" value="BAH16625.1"/>
    <property type="molecule type" value="mRNA"/>
</dbReference>
<dbReference type="EMBL" id="AF318370">
    <property type="protein sequence ID" value="AAL55877.1"/>
    <property type="molecule type" value="mRNA"/>
</dbReference>
<dbReference type="EMBL" id="AK026105">
    <property type="protein sequence ID" value="BAB15361.1"/>
    <property type="molecule type" value="mRNA"/>
</dbReference>
<dbReference type="EMBL" id="AK124772">
    <property type="protein sequence ID" value="BAG54093.1"/>
    <property type="molecule type" value="mRNA"/>
</dbReference>
<dbReference type="EMBL" id="AK298575">
    <property type="protein sequence ID" value="BAG60767.1"/>
    <property type="molecule type" value="mRNA"/>
</dbReference>
<dbReference type="EMBL" id="AL353935">
    <property type="protein sequence ID" value="CAB89247.2"/>
    <property type="status" value="ALT_INIT"/>
    <property type="molecule type" value="mRNA"/>
</dbReference>
<dbReference type="EMBL" id="AL137073">
    <property type="status" value="NOT_ANNOTATED_CDS"/>
    <property type="molecule type" value="Genomic_DNA"/>
</dbReference>
<dbReference type="EMBL" id="AL360081">
    <property type="status" value="NOT_ANNOTATED_CDS"/>
    <property type="molecule type" value="Genomic_DNA"/>
</dbReference>
<dbReference type="EMBL" id="AL591502">
    <property type="status" value="NOT_ANNOTATED_CDS"/>
    <property type="molecule type" value="Genomic_DNA"/>
</dbReference>
<dbReference type="EMBL" id="CH471105">
    <property type="protein sequence ID" value="EAW58882.1"/>
    <property type="molecule type" value="Genomic_DNA"/>
</dbReference>
<dbReference type="EMBL" id="CH471105">
    <property type="protein sequence ID" value="EAW58884.1"/>
    <property type="molecule type" value="Genomic_DNA"/>
</dbReference>
<dbReference type="EMBL" id="CH471105">
    <property type="protein sequence ID" value="EAW58887.1"/>
    <property type="molecule type" value="Genomic_DNA"/>
</dbReference>
<dbReference type="EMBL" id="BC028918">
    <property type="protein sequence ID" value="AAH28918.1"/>
    <property type="molecule type" value="mRNA"/>
</dbReference>
<dbReference type="EMBL" id="BC071978">
    <property type="protein sequence ID" value="AAH71978.1"/>
    <property type="molecule type" value="mRNA"/>
</dbReference>
<dbReference type="EMBL" id="AB209721">
    <property type="protein sequence ID" value="BAD92958.1"/>
    <property type="molecule type" value="mRNA"/>
</dbReference>
<dbReference type="CCDS" id="CCDS35080.1">
    <molecule id="Q9BYX2-2"/>
</dbReference>
<dbReference type="CCDS" id="CCDS59137.1">
    <molecule id="Q9BYX2-6"/>
</dbReference>
<dbReference type="CCDS" id="CCDS75865.1">
    <molecule id="Q9BYX2-1"/>
</dbReference>
<dbReference type="CCDS" id="CCDS94445.1">
    <molecule id="Q9BYX2-3"/>
</dbReference>
<dbReference type="PIR" id="JC7799">
    <property type="entry name" value="JC7799"/>
</dbReference>
<dbReference type="PIR" id="T48686">
    <property type="entry name" value="T48686"/>
</dbReference>
<dbReference type="RefSeq" id="NP_001254500.1">
    <molecule id="Q9BYX2-1"/>
    <property type="nucleotide sequence ID" value="NM_001267571.2"/>
</dbReference>
<dbReference type="RefSeq" id="NP_001254501.1">
    <molecule id="Q9BYX2-6"/>
    <property type="nucleotide sequence ID" value="NM_001267572.1"/>
</dbReference>
<dbReference type="RefSeq" id="NP_001397917.1">
    <molecule id="Q9BYX2-3"/>
    <property type="nucleotide sequence ID" value="NM_001410988.1"/>
</dbReference>
<dbReference type="RefSeq" id="NP_060891.3">
    <molecule id="Q9BYX2-2"/>
    <property type="nucleotide sequence ID" value="NM_018421.4"/>
</dbReference>
<dbReference type="RefSeq" id="XP_011517145.1">
    <molecule id="Q9BYX2-6"/>
    <property type="nucleotide sequence ID" value="XM_011518843.3"/>
</dbReference>
<dbReference type="RefSeq" id="XP_024303374.1">
    <molecule id="Q9BYX2-6"/>
    <property type="nucleotide sequence ID" value="XM_024447606.2"/>
</dbReference>
<dbReference type="RefSeq" id="XP_054219208.1">
    <molecule id="Q9BYX2-6"/>
    <property type="nucleotide sequence ID" value="XM_054363233.1"/>
</dbReference>
<dbReference type="RefSeq" id="XP_054219209.1">
    <molecule id="Q9BYX2-6"/>
    <property type="nucleotide sequence ID" value="XM_054363234.1"/>
</dbReference>
<dbReference type="PDB" id="2DHK">
    <property type="method" value="NMR"/>
    <property type="chains" value="A=46-151"/>
</dbReference>
<dbReference type="PDBsum" id="2DHK"/>
<dbReference type="BMRB" id="Q9BYX2"/>
<dbReference type="SMR" id="Q9BYX2"/>
<dbReference type="BioGRID" id="120637">
    <property type="interactions" value="39"/>
</dbReference>
<dbReference type="FunCoup" id="Q9BYX2">
    <property type="interactions" value="854"/>
</dbReference>
<dbReference type="IntAct" id="Q9BYX2">
    <property type="interactions" value="19"/>
</dbReference>
<dbReference type="MINT" id="Q9BYX2"/>
<dbReference type="STRING" id="9606.ENSP00000481721"/>
<dbReference type="GlyGen" id="Q9BYX2">
    <property type="glycosylation" value="3 sites, 1 O-linked glycan (1 site)"/>
</dbReference>
<dbReference type="iPTMnet" id="Q9BYX2"/>
<dbReference type="PhosphoSitePlus" id="Q9BYX2"/>
<dbReference type="SwissPalm" id="Q9BYX2"/>
<dbReference type="BioMuta" id="TBC1D2"/>
<dbReference type="DMDM" id="300669706"/>
<dbReference type="jPOST" id="Q9BYX2"/>
<dbReference type="MassIVE" id="Q9BYX2"/>
<dbReference type="PaxDb" id="9606-ENSP00000481721"/>
<dbReference type="PeptideAtlas" id="Q9BYX2"/>
<dbReference type="ProteomicsDB" id="79734">
    <molecule id="Q9BYX2-1"/>
</dbReference>
<dbReference type="ProteomicsDB" id="79735">
    <molecule id="Q9BYX2-2"/>
</dbReference>
<dbReference type="ProteomicsDB" id="79736">
    <molecule id="Q9BYX2-3"/>
</dbReference>
<dbReference type="ProteomicsDB" id="79737">
    <molecule id="Q9BYX2-4"/>
</dbReference>
<dbReference type="ProteomicsDB" id="79738">
    <molecule id="Q9BYX2-5"/>
</dbReference>
<dbReference type="ProteomicsDB" id="79739">
    <molecule id="Q9BYX2-6"/>
</dbReference>
<dbReference type="Pumba" id="Q9BYX2"/>
<dbReference type="Antibodypedia" id="28952">
    <property type="antibodies" value="110 antibodies from 23 providers"/>
</dbReference>
<dbReference type="DNASU" id="55357"/>
<dbReference type="Ensembl" id="ENST00000342112.9">
    <molecule id="Q9BYX2-4"/>
    <property type="protein sequence ID" value="ENSP00000341567.5"/>
    <property type="gene ID" value="ENSG00000095383.20"/>
</dbReference>
<dbReference type="Ensembl" id="ENST00000375063.5">
    <molecule id="Q9BYX2-6"/>
    <property type="protein sequence ID" value="ENSP00000364203.1"/>
    <property type="gene ID" value="ENSG00000095383.20"/>
</dbReference>
<dbReference type="Ensembl" id="ENST00000375064.5">
    <molecule id="Q9BYX2-3"/>
    <property type="protein sequence ID" value="ENSP00000364205.1"/>
    <property type="gene ID" value="ENSG00000095383.20"/>
</dbReference>
<dbReference type="Ensembl" id="ENST00000375066.6">
    <molecule id="Q9BYX2-2"/>
    <property type="protein sequence ID" value="ENSP00000364207.5"/>
    <property type="gene ID" value="ENSG00000095383.20"/>
</dbReference>
<dbReference type="Ensembl" id="ENST00000465784.7">
    <molecule id="Q9BYX2-1"/>
    <property type="protein sequence ID" value="ENSP00000481721.1"/>
    <property type="gene ID" value="ENSG00000095383.20"/>
</dbReference>
<dbReference type="GeneID" id="55357"/>
<dbReference type="KEGG" id="hsa:55357"/>
<dbReference type="MANE-Select" id="ENST00000465784.7">
    <property type="protein sequence ID" value="ENSP00000481721.1"/>
    <property type="RefSeq nucleotide sequence ID" value="NM_001267571.2"/>
    <property type="RefSeq protein sequence ID" value="NP_001254500.1"/>
</dbReference>
<dbReference type="UCSC" id="uc004ayp.5">
    <molecule id="Q9BYX2-1"/>
    <property type="organism name" value="human"/>
</dbReference>
<dbReference type="AGR" id="HGNC:18026"/>
<dbReference type="CTD" id="55357"/>
<dbReference type="DisGeNET" id="55357"/>
<dbReference type="GeneCards" id="TBC1D2"/>
<dbReference type="HGNC" id="HGNC:18026">
    <property type="gene designation" value="TBC1D2"/>
</dbReference>
<dbReference type="HPA" id="ENSG00000095383">
    <property type="expression patterns" value="Low tissue specificity"/>
</dbReference>
<dbReference type="MIM" id="609871">
    <property type="type" value="gene"/>
</dbReference>
<dbReference type="neXtProt" id="NX_Q9BYX2"/>
<dbReference type="OpenTargets" id="ENSG00000095383"/>
<dbReference type="PharmGKB" id="PA38280"/>
<dbReference type="VEuPathDB" id="HostDB:ENSG00000095383"/>
<dbReference type="eggNOG" id="KOG2058">
    <property type="taxonomic scope" value="Eukaryota"/>
</dbReference>
<dbReference type="GeneTree" id="ENSGT00940000159937"/>
<dbReference type="HOGENOM" id="CLU_578202_0_0_1"/>
<dbReference type="InParanoid" id="Q9BYX2"/>
<dbReference type="OMA" id="RWEFCNT"/>
<dbReference type="OrthoDB" id="294251at2759"/>
<dbReference type="PAN-GO" id="Q9BYX2">
    <property type="GO annotations" value="2 GO annotations based on evolutionary models"/>
</dbReference>
<dbReference type="PhylomeDB" id="Q9BYX2"/>
<dbReference type="TreeFam" id="TF317336"/>
<dbReference type="PathwayCommons" id="Q9BYX2"/>
<dbReference type="Reactome" id="R-HSA-8854214">
    <property type="pathway name" value="TBC/RABGAPs"/>
</dbReference>
<dbReference type="SignaLink" id="Q9BYX2"/>
<dbReference type="BioGRID-ORCS" id="55357">
    <property type="hits" value="7 hits in 1157 CRISPR screens"/>
</dbReference>
<dbReference type="ChiTaRS" id="TBC1D2">
    <property type="organism name" value="human"/>
</dbReference>
<dbReference type="EvolutionaryTrace" id="Q9BYX2"/>
<dbReference type="GenomeRNAi" id="55357"/>
<dbReference type="Pharos" id="Q9BYX2">
    <property type="development level" value="Tbio"/>
</dbReference>
<dbReference type="PRO" id="PR:Q9BYX2"/>
<dbReference type="Proteomes" id="UP000005640">
    <property type="component" value="Chromosome 9"/>
</dbReference>
<dbReference type="RNAct" id="Q9BYX2">
    <property type="molecule type" value="protein"/>
</dbReference>
<dbReference type="Bgee" id="ENSG00000095383">
    <property type="expression patterns" value="Expressed in monocyte and 163 other cell types or tissues"/>
</dbReference>
<dbReference type="ExpressionAtlas" id="Q9BYX2">
    <property type="expression patterns" value="baseline and differential"/>
</dbReference>
<dbReference type="GO" id="GO:0070161">
    <property type="term" value="C:anchoring junction"/>
    <property type="evidence" value="ECO:0007669"/>
    <property type="project" value="UniProtKB-SubCell"/>
</dbReference>
<dbReference type="GO" id="GO:0030054">
    <property type="term" value="C:cell junction"/>
    <property type="evidence" value="ECO:0000314"/>
    <property type="project" value="UniProtKB"/>
</dbReference>
<dbReference type="GO" id="GO:0005737">
    <property type="term" value="C:cytoplasm"/>
    <property type="evidence" value="ECO:0000318"/>
    <property type="project" value="GO_Central"/>
</dbReference>
<dbReference type="GO" id="GO:0031410">
    <property type="term" value="C:cytoplasmic vesicle"/>
    <property type="evidence" value="ECO:0000314"/>
    <property type="project" value="UniProtKB"/>
</dbReference>
<dbReference type="GO" id="GO:0005829">
    <property type="term" value="C:cytosol"/>
    <property type="evidence" value="ECO:0000314"/>
    <property type="project" value="HPA"/>
</dbReference>
<dbReference type="GO" id="GO:0005654">
    <property type="term" value="C:nucleoplasm"/>
    <property type="evidence" value="ECO:0000314"/>
    <property type="project" value="HPA"/>
</dbReference>
<dbReference type="GO" id="GO:0005886">
    <property type="term" value="C:plasma membrane"/>
    <property type="evidence" value="ECO:0000314"/>
    <property type="project" value="HPA"/>
</dbReference>
<dbReference type="GO" id="GO:0045296">
    <property type="term" value="F:cadherin binding"/>
    <property type="evidence" value="ECO:0000353"/>
    <property type="project" value="UniProtKB"/>
</dbReference>
<dbReference type="GO" id="GO:0005096">
    <property type="term" value="F:GTPase activator activity"/>
    <property type="evidence" value="ECO:0000314"/>
    <property type="project" value="UniProtKB"/>
</dbReference>
<dbReference type="GO" id="GO:0043547">
    <property type="term" value="P:positive regulation of GTPase activity"/>
    <property type="evidence" value="ECO:0000314"/>
    <property type="project" value="UniProtKB"/>
</dbReference>
<dbReference type="CDD" id="cd01265">
    <property type="entry name" value="PH_TBC1D2A"/>
    <property type="match status" value="1"/>
</dbReference>
<dbReference type="FunFam" id="1.10.8.270:FF:000014">
    <property type="entry name" value="Putative TBC1 domain family member 2B"/>
    <property type="match status" value="1"/>
</dbReference>
<dbReference type="FunFam" id="2.30.29.30:FF:000248">
    <property type="entry name" value="TBC1 domain family member 2A isoform X1"/>
    <property type="match status" value="1"/>
</dbReference>
<dbReference type="FunFam" id="1.10.472.80:FF:000018">
    <property type="entry name" value="TBC1 domain family member 2B"/>
    <property type="match status" value="1"/>
</dbReference>
<dbReference type="Gene3D" id="2.30.29.30">
    <property type="entry name" value="Pleckstrin-homology domain (PH domain)/Phosphotyrosine-binding domain (PTB)"/>
    <property type="match status" value="1"/>
</dbReference>
<dbReference type="Gene3D" id="1.10.8.270">
    <property type="entry name" value="putative rabgap domain of human tbc1 domain family member 14 like domains"/>
    <property type="match status" value="1"/>
</dbReference>
<dbReference type="Gene3D" id="1.10.472.80">
    <property type="entry name" value="Ypt/Rab-GAP domain of gyp1p, domain 3"/>
    <property type="match status" value="1"/>
</dbReference>
<dbReference type="InterPro" id="IPR011993">
    <property type="entry name" value="PH-like_dom_sf"/>
</dbReference>
<dbReference type="InterPro" id="IPR001849">
    <property type="entry name" value="PH_domain"/>
</dbReference>
<dbReference type="InterPro" id="IPR000195">
    <property type="entry name" value="Rab-GAP-TBC_dom"/>
</dbReference>
<dbReference type="InterPro" id="IPR035969">
    <property type="entry name" value="Rab-GAP_TBC_sf"/>
</dbReference>
<dbReference type="InterPro" id="IPR050302">
    <property type="entry name" value="Rab_GAP_TBC_domain"/>
</dbReference>
<dbReference type="PANTHER" id="PTHR47219">
    <property type="entry name" value="RAB GTPASE-ACTIVATING PROTEIN 1-LIKE"/>
    <property type="match status" value="1"/>
</dbReference>
<dbReference type="PANTHER" id="PTHR47219:SF20">
    <property type="entry name" value="TBC1 DOMAIN FAMILY MEMBER 2B"/>
    <property type="match status" value="1"/>
</dbReference>
<dbReference type="Pfam" id="PF00169">
    <property type="entry name" value="PH"/>
    <property type="match status" value="1"/>
</dbReference>
<dbReference type="Pfam" id="PF00566">
    <property type="entry name" value="RabGAP-TBC"/>
    <property type="match status" value="1"/>
</dbReference>
<dbReference type="SMART" id="SM00233">
    <property type="entry name" value="PH"/>
    <property type="match status" value="1"/>
</dbReference>
<dbReference type="SMART" id="SM00164">
    <property type="entry name" value="TBC"/>
    <property type="match status" value="1"/>
</dbReference>
<dbReference type="SUPFAM" id="SSF50729">
    <property type="entry name" value="PH domain-like"/>
    <property type="match status" value="1"/>
</dbReference>
<dbReference type="SUPFAM" id="SSF47923">
    <property type="entry name" value="Ypt/Rab-GAP domain of gyp1p"/>
    <property type="match status" value="2"/>
</dbReference>
<dbReference type="PROSITE" id="PS50003">
    <property type="entry name" value="PH_DOMAIN"/>
    <property type="match status" value="1"/>
</dbReference>
<dbReference type="PROSITE" id="PS50086">
    <property type="entry name" value="TBC_RABGAP"/>
    <property type="match status" value="1"/>
</dbReference>